<gene>
    <name evidence="1" type="primary">lpxD</name>
    <name type="ordered locus">XfasM23_0321</name>
</gene>
<sequence>MPIFTAQELAERFNLQLFGDGNIRIHGVATLTQASPEQLSFLANPRYLTQLPNSRAGVIVLHADDVKAASGAVLIAKDPYVTFAKIATLFDIKPAREAGIHPLATVDPSAHVSPTAHVGAFVSIGARSSIGASCIIGTGSIIGDDCTIDDGSELIARVTLISRVRLGKRVRIHPGAVLGGEGFGLAMESGHWIKIPQLGGVVIGDDCEIGANSCIDRGALDDTVLEEDVHIDNLVQIAHNCRIGAHTAIAGCTGIAGSAKIGRYCLLGGHVGVVGHLQICDNVVITGKSVVRNSIHTPGEYSSGTPLTDNRTWRKNAVRFKQLDMLVRRMMAVSKEKA</sequence>
<evidence type="ECO:0000255" key="1">
    <source>
        <dbReference type="HAMAP-Rule" id="MF_00523"/>
    </source>
</evidence>
<reference key="1">
    <citation type="journal article" date="2010" name="J. Bacteriol.">
        <title>Whole genome sequences of two Xylella fastidiosa strains (M12 and M23) causing almond leaf scorch disease in California.</title>
        <authorList>
            <person name="Chen J."/>
            <person name="Xie G."/>
            <person name="Han S."/>
            <person name="Chertkov O."/>
            <person name="Sims D."/>
            <person name="Civerolo E.L."/>
        </authorList>
    </citation>
    <scope>NUCLEOTIDE SEQUENCE [LARGE SCALE GENOMIC DNA]</scope>
    <source>
        <strain>M23</strain>
    </source>
</reference>
<dbReference type="EC" id="2.3.1.191" evidence="1"/>
<dbReference type="EMBL" id="CP001011">
    <property type="protein sequence ID" value="ACB91769.1"/>
    <property type="molecule type" value="Genomic_DNA"/>
</dbReference>
<dbReference type="RefSeq" id="WP_004089333.1">
    <property type="nucleotide sequence ID" value="NC_010577.1"/>
</dbReference>
<dbReference type="SMR" id="B2I7P1"/>
<dbReference type="GeneID" id="93904026"/>
<dbReference type="KEGG" id="xfn:XfasM23_0321"/>
<dbReference type="HOGENOM" id="CLU_049865_0_1_6"/>
<dbReference type="UniPathway" id="UPA00973"/>
<dbReference type="Proteomes" id="UP000001698">
    <property type="component" value="Chromosome"/>
</dbReference>
<dbReference type="GO" id="GO:0016020">
    <property type="term" value="C:membrane"/>
    <property type="evidence" value="ECO:0007669"/>
    <property type="project" value="GOC"/>
</dbReference>
<dbReference type="GO" id="GO:0016410">
    <property type="term" value="F:N-acyltransferase activity"/>
    <property type="evidence" value="ECO:0007669"/>
    <property type="project" value="InterPro"/>
</dbReference>
<dbReference type="GO" id="GO:0009245">
    <property type="term" value="P:lipid A biosynthetic process"/>
    <property type="evidence" value="ECO:0007669"/>
    <property type="project" value="UniProtKB-UniRule"/>
</dbReference>
<dbReference type="CDD" id="cd03352">
    <property type="entry name" value="LbH_LpxD"/>
    <property type="match status" value="1"/>
</dbReference>
<dbReference type="Gene3D" id="1.20.5.170">
    <property type="match status" value="1"/>
</dbReference>
<dbReference type="Gene3D" id="2.160.10.10">
    <property type="entry name" value="Hexapeptide repeat proteins"/>
    <property type="match status" value="1"/>
</dbReference>
<dbReference type="Gene3D" id="3.40.1390.10">
    <property type="entry name" value="MurE/MurF, N-terminal domain"/>
    <property type="match status" value="1"/>
</dbReference>
<dbReference type="HAMAP" id="MF_00523">
    <property type="entry name" value="LpxD"/>
    <property type="match status" value="1"/>
</dbReference>
<dbReference type="InterPro" id="IPR001451">
    <property type="entry name" value="Hexapep"/>
</dbReference>
<dbReference type="InterPro" id="IPR007691">
    <property type="entry name" value="LpxD"/>
</dbReference>
<dbReference type="InterPro" id="IPR011004">
    <property type="entry name" value="Trimer_LpxA-like_sf"/>
</dbReference>
<dbReference type="InterPro" id="IPR020573">
    <property type="entry name" value="UDP_GlcNAc_AcTrfase_non-rep"/>
</dbReference>
<dbReference type="NCBIfam" id="TIGR01853">
    <property type="entry name" value="lipid_A_lpxD"/>
    <property type="match status" value="1"/>
</dbReference>
<dbReference type="NCBIfam" id="NF002060">
    <property type="entry name" value="PRK00892.1"/>
    <property type="match status" value="1"/>
</dbReference>
<dbReference type="PANTHER" id="PTHR43378">
    <property type="entry name" value="UDP-3-O-ACYLGLUCOSAMINE N-ACYLTRANSFERASE"/>
    <property type="match status" value="1"/>
</dbReference>
<dbReference type="PANTHER" id="PTHR43378:SF2">
    <property type="entry name" value="UDP-3-O-ACYLGLUCOSAMINE N-ACYLTRANSFERASE 1, MITOCHONDRIAL-RELATED"/>
    <property type="match status" value="1"/>
</dbReference>
<dbReference type="Pfam" id="PF00132">
    <property type="entry name" value="Hexapep"/>
    <property type="match status" value="1"/>
</dbReference>
<dbReference type="Pfam" id="PF14602">
    <property type="entry name" value="Hexapep_2"/>
    <property type="match status" value="2"/>
</dbReference>
<dbReference type="Pfam" id="PF04613">
    <property type="entry name" value="LpxD"/>
    <property type="match status" value="1"/>
</dbReference>
<dbReference type="SUPFAM" id="SSF51161">
    <property type="entry name" value="Trimeric LpxA-like enzymes"/>
    <property type="match status" value="1"/>
</dbReference>
<feature type="chain" id="PRO_1000127697" description="UDP-3-O-acylglucosamine N-acyltransferase">
    <location>
        <begin position="1"/>
        <end position="338"/>
    </location>
</feature>
<feature type="active site" description="Proton acceptor" evidence="1">
    <location>
        <position position="239"/>
    </location>
</feature>
<name>LPXD_XYLF2</name>
<protein>
    <recommendedName>
        <fullName evidence="1">UDP-3-O-acylglucosamine N-acyltransferase</fullName>
        <ecNumber evidence="1">2.3.1.191</ecNumber>
    </recommendedName>
</protein>
<organism>
    <name type="scientific">Xylella fastidiosa (strain M23)</name>
    <dbReference type="NCBI Taxonomy" id="405441"/>
    <lineage>
        <taxon>Bacteria</taxon>
        <taxon>Pseudomonadati</taxon>
        <taxon>Pseudomonadota</taxon>
        <taxon>Gammaproteobacteria</taxon>
        <taxon>Lysobacterales</taxon>
        <taxon>Lysobacteraceae</taxon>
        <taxon>Xylella</taxon>
    </lineage>
</organism>
<proteinExistence type="inferred from homology"/>
<accession>B2I7P1</accession>
<comment type="function">
    <text evidence="1">Catalyzes the N-acylation of UDP-3-O-acylglucosamine using 3-hydroxyacyl-ACP as the acyl donor. Is involved in the biosynthesis of lipid A, a phosphorylated glycolipid that anchors the lipopolysaccharide to the outer membrane of the cell.</text>
</comment>
<comment type="catalytic activity">
    <reaction evidence="1">
        <text>a UDP-3-O-[(3R)-3-hydroxyacyl]-alpha-D-glucosamine + a (3R)-hydroxyacyl-[ACP] = a UDP-2-N,3-O-bis[(3R)-3-hydroxyacyl]-alpha-D-glucosamine + holo-[ACP] + H(+)</text>
        <dbReference type="Rhea" id="RHEA:53836"/>
        <dbReference type="Rhea" id="RHEA-COMP:9685"/>
        <dbReference type="Rhea" id="RHEA-COMP:9945"/>
        <dbReference type="ChEBI" id="CHEBI:15378"/>
        <dbReference type="ChEBI" id="CHEBI:64479"/>
        <dbReference type="ChEBI" id="CHEBI:78827"/>
        <dbReference type="ChEBI" id="CHEBI:137740"/>
        <dbReference type="ChEBI" id="CHEBI:137748"/>
        <dbReference type="EC" id="2.3.1.191"/>
    </reaction>
</comment>
<comment type="pathway">
    <text evidence="1">Bacterial outer membrane biogenesis; LPS lipid A biosynthesis.</text>
</comment>
<comment type="subunit">
    <text evidence="1">Homotrimer.</text>
</comment>
<comment type="similarity">
    <text evidence="1">Belongs to the transferase hexapeptide repeat family. LpxD subfamily.</text>
</comment>
<keyword id="KW-0012">Acyltransferase</keyword>
<keyword id="KW-0441">Lipid A biosynthesis</keyword>
<keyword id="KW-0444">Lipid biosynthesis</keyword>
<keyword id="KW-0443">Lipid metabolism</keyword>
<keyword id="KW-0677">Repeat</keyword>
<keyword id="KW-0808">Transferase</keyword>